<evidence type="ECO:0000255" key="1">
    <source>
        <dbReference type="HAMAP-Rule" id="MF_01527"/>
    </source>
</evidence>
<reference key="1">
    <citation type="journal article" date="2005" name="Jpn. Agric. Res. Q.">
        <title>Genome sequence of Xanthomonas oryzae pv. oryzae suggests contribution of large numbers of effector genes and insertion sequences to its race diversity.</title>
        <authorList>
            <person name="Ochiai H."/>
            <person name="Inoue Y."/>
            <person name="Takeya M."/>
            <person name="Sasaki A."/>
            <person name="Kaku H."/>
        </authorList>
    </citation>
    <scope>NUCLEOTIDE SEQUENCE [LARGE SCALE GENOMIC DNA]</scope>
    <source>
        <strain>MAFF 311018</strain>
    </source>
</reference>
<sequence>MSATLPDVAVTEAFTLSAPLRWVGMQDIAIPVHLDAASGSGLAARASVQVDLPRAELKGIHMSRLYRLLDLHLQRPLSPAMLPQLLQALIESHADCASRAARLTLSFALMLRMPALRSEGLSGWRAYPVRIAAQCRAGRTTIQLQVEVLYASTCPCSAALSRQLLSDAFVQQHAWCDALPLQDVAQWLQDHGSYATPHSQRSVAQVCVDLPADTQGFAIQELIGLCEQALATPVQAAVRRPDEQAFARLNGANLMYVEDAARRLRKQLAEHYATFHVAVRHLESLHAHDAVAETGSDDETFFPAAL</sequence>
<dbReference type="EC" id="3.5.4.16" evidence="1"/>
<dbReference type="EMBL" id="AP008229">
    <property type="protein sequence ID" value="BAE69003.1"/>
    <property type="molecule type" value="Genomic_DNA"/>
</dbReference>
<dbReference type="RefSeq" id="WP_011408568.1">
    <property type="nucleotide sequence ID" value="NC_007705.1"/>
</dbReference>
<dbReference type="SMR" id="Q2P374"/>
<dbReference type="KEGG" id="xom:XOO2248"/>
<dbReference type="HOGENOM" id="CLU_062816_0_0_6"/>
<dbReference type="UniPathway" id="UPA00848">
    <property type="reaction ID" value="UER00151"/>
</dbReference>
<dbReference type="GO" id="GO:0003934">
    <property type="term" value="F:GTP cyclohydrolase I activity"/>
    <property type="evidence" value="ECO:0007669"/>
    <property type="project" value="UniProtKB-UniRule"/>
</dbReference>
<dbReference type="GO" id="GO:0046654">
    <property type="term" value="P:tetrahydrofolate biosynthetic process"/>
    <property type="evidence" value="ECO:0007669"/>
    <property type="project" value="UniProtKB-UniRule"/>
</dbReference>
<dbReference type="Gene3D" id="3.10.270.10">
    <property type="entry name" value="Urate Oxidase"/>
    <property type="match status" value="1"/>
</dbReference>
<dbReference type="HAMAP" id="MF_01527_B">
    <property type="entry name" value="GTP_cyclohydrol_B"/>
    <property type="match status" value="1"/>
</dbReference>
<dbReference type="InterPro" id="IPR022838">
    <property type="entry name" value="GTP_cyclohydrolase_FolE2"/>
</dbReference>
<dbReference type="InterPro" id="IPR003801">
    <property type="entry name" value="GTP_cyclohydrolase_FolE2/MptA"/>
</dbReference>
<dbReference type="NCBIfam" id="NF010200">
    <property type="entry name" value="PRK13674.1-1"/>
    <property type="match status" value="1"/>
</dbReference>
<dbReference type="PANTHER" id="PTHR36445">
    <property type="entry name" value="GTP CYCLOHYDROLASE MPTA"/>
    <property type="match status" value="1"/>
</dbReference>
<dbReference type="PANTHER" id="PTHR36445:SF1">
    <property type="entry name" value="GTP CYCLOHYDROLASE MPTA"/>
    <property type="match status" value="1"/>
</dbReference>
<dbReference type="Pfam" id="PF02649">
    <property type="entry name" value="GCHY-1"/>
    <property type="match status" value="1"/>
</dbReference>
<name>GCH4_XANOM</name>
<feature type="chain" id="PRO_0000289533" description="GTP cyclohydrolase FolE2">
    <location>
        <begin position="1"/>
        <end position="306"/>
    </location>
</feature>
<feature type="site" description="May be catalytically important" evidence="1">
    <location>
        <position position="154"/>
    </location>
</feature>
<accession>Q2P374</accession>
<organism>
    <name type="scientific">Xanthomonas oryzae pv. oryzae (strain MAFF 311018)</name>
    <dbReference type="NCBI Taxonomy" id="342109"/>
    <lineage>
        <taxon>Bacteria</taxon>
        <taxon>Pseudomonadati</taxon>
        <taxon>Pseudomonadota</taxon>
        <taxon>Gammaproteobacteria</taxon>
        <taxon>Lysobacterales</taxon>
        <taxon>Lysobacteraceae</taxon>
        <taxon>Xanthomonas</taxon>
    </lineage>
</organism>
<keyword id="KW-0378">Hydrolase</keyword>
<gene>
    <name evidence="1" type="primary">folE2</name>
    <name type="ordered locus">XOO2248</name>
</gene>
<protein>
    <recommendedName>
        <fullName evidence="1">GTP cyclohydrolase FolE2</fullName>
        <ecNumber evidence="1">3.5.4.16</ecNumber>
    </recommendedName>
</protein>
<proteinExistence type="inferred from homology"/>
<comment type="function">
    <text evidence="1">Converts GTP to 7,8-dihydroneopterin triphosphate.</text>
</comment>
<comment type="catalytic activity">
    <reaction evidence="1">
        <text>GTP + H2O = 7,8-dihydroneopterin 3'-triphosphate + formate + H(+)</text>
        <dbReference type="Rhea" id="RHEA:17473"/>
        <dbReference type="ChEBI" id="CHEBI:15377"/>
        <dbReference type="ChEBI" id="CHEBI:15378"/>
        <dbReference type="ChEBI" id="CHEBI:15740"/>
        <dbReference type="ChEBI" id="CHEBI:37565"/>
        <dbReference type="ChEBI" id="CHEBI:58462"/>
        <dbReference type="EC" id="3.5.4.16"/>
    </reaction>
</comment>
<comment type="pathway">
    <text evidence="1">Cofactor biosynthesis; 7,8-dihydroneopterin triphosphate biosynthesis; 7,8-dihydroneopterin triphosphate from GTP: step 1/1.</text>
</comment>
<comment type="similarity">
    <text evidence="1">Belongs to the GTP cyclohydrolase IV family.</text>
</comment>